<organism>
    <name type="scientific">Salmonella typhimurium (strain LT2 / SGSC1412 / ATCC 700720)</name>
    <dbReference type="NCBI Taxonomy" id="99287"/>
    <lineage>
        <taxon>Bacteria</taxon>
        <taxon>Pseudomonadati</taxon>
        <taxon>Pseudomonadota</taxon>
        <taxon>Gammaproteobacteria</taxon>
        <taxon>Enterobacterales</taxon>
        <taxon>Enterobacteriaceae</taxon>
        <taxon>Salmonella</taxon>
    </lineage>
</organism>
<accession>Q7CQ90</accession>
<sequence length="35" mass="3580">MRVAKIGVIALFLLMAIGGIGGVMLAGYSFILRAG</sequence>
<feature type="chain" id="PRO_0000252200" description="UPF0387 membrane protein YohO">
    <location>
        <begin position="1"/>
        <end position="35"/>
    </location>
</feature>
<feature type="transmembrane region" description="Helical" evidence="1">
    <location>
        <begin position="6"/>
        <end position="26"/>
    </location>
</feature>
<protein>
    <recommendedName>
        <fullName evidence="1">UPF0387 membrane protein YohO</fullName>
    </recommendedName>
</protein>
<keyword id="KW-0997">Cell inner membrane</keyword>
<keyword id="KW-1003">Cell membrane</keyword>
<keyword id="KW-0472">Membrane</keyword>
<keyword id="KW-1185">Reference proteome</keyword>
<keyword id="KW-0812">Transmembrane</keyword>
<keyword id="KW-1133">Transmembrane helix</keyword>
<proteinExistence type="inferred from homology"/>
<reference key="1">
    <citation type="journal article" date="2001" name="Nature">
        <title>Complete genome sequence of Salmonella enterica serovar Typhimurium LT2.</title>
        <authorList>
            <person name="McClelland M."/>
            <person name="Sanderson K.E."/>
            <person name="Spieth J."/>
            <person name="Clifton S.W."/>
            <person name="Latreille P."/>
            <person name="Courtney L."/>
            <person name="Porwollik S."/>
            <person name="Ali J."/>
            <person name="Dante M."/>
            <person name="Du F."/>
            <person name="Hou S."/>
            <person name="Layman D."/>
            <person name="Leonard S."/>
            <person name="Nguyen C."/>
            <person name="Scott K."/>
            <person name="Holmes A."/>
            <person name="Grewal N."/>
            <person name="Mulvaney E."/>
            <person name="Ryan E."/>
            <person name="Sun H."/>
            <person name="Florea L."/>
            <person name="Miller W."/>
            <person name="Stoneking T."/>
            <person name="Nhan M."/>
            <person name="Waterston R."/>
            <person name="Wilson R.K."/>
        </authorList>
    </citation>
    <scope>NUCLEOTIDE SEQUENCE [LARGE SCALE GENOMIC DNA]</scope>
    <source>
        <strain>LT2 / SGSC1412 / ATCC 700720</strain>
    </source>
</reference>
<name>YOHO_SALTY</name>
<comment type="subcellular location">
    <subcellularLocation>
        <location evidence="1">Cell inner membrane</location>
        <topology evidence="1">Single-pass membrane protein</topology>
    </subcellularLocation>
</comment>
<comment type="similarity">
    <text evidence="1">Belongs to the UPF0387 family.</text>
</comment>
<gene>
    <name evidence="1" type="primary">yohO</name>
    <name type="ordered locus">STM2161</name>
</gene>
<dbReference type="EMBL" id="AE006468">
    <property type="protein sequence ID" value="AAL21065.1"/>
    <property type="molecule type" value="Genomic_DNA"/>
</dbReference>
<dbReference type="RefSeq" id="NP_461106.1">
    <property type="nucleotide sequence ID" value="NC_003197.2"/>
</dbReference>
<dbReference type="RefSeq" id="WP_001261696.1">
    <property type="nucleotide sequence ID" value="NC_003197.2"/>
</dbReference>
<dbReference type="PaxDb" id="99287-STM2161"/>
<dbReference type="GeneID" id="1253683"/>
<dbReference type="KEGG" id="stm:STM2161"/>
<dbReference type="PATRIC" id="fig|99287.12.peg.2287"/>
<dbReference type="HOGENOM" id="CLU_220259_0_0_6"/>
<dbReference type="PhylomeDB" id="Q7CQ90"/>
<dbReference type="BioCyc" id="SENT99287:STM2161-MONOMER"/>
<dbReference type="Proteomes" id="UP000001014">
    <property type="component" value="Chromosome"/>
</dbReference>
<dbReference type="GO" id="GO:0005886">
    <property type="term" value="C:plasma membrane"/>
    <property type="evidence" value="ECO:0007669"/>
    <property type="project" value="UniProtKB-SubCell"/>
</dbReference>
<dbReference type="HAMAP" id="MF_01362">
    <property type="entry name" value="UPF0387"/>
    <property type="match status" value="1"/>
</dbReference>
<dbReference type="InterPro" id="IPR020870">
    <property type="entry name" value="UPF0387_membrane"/>
</dbReference>
<dbReference type="NCBIfam" id="NF010225">
    <property type="entry name" value="PRK13681.1"/>
    <property type="match status" value="1"/>
</dbReference>
<evidence type="ECO:0000255" key="1">
    <source>
        <dbReference type="HAMAP-Rule" id="MF_01362"/>
    </source>
</evidence>